<sequence>MSSPAEYYKSLPPISKAYGTLCFFTTVLVRLHILNPLFLYLYYPRVFKKFEVWRIFTSFFFLGPFSINFGIRLLMIARYGVMLEKGAFDKRTADFLWMMIFGAISLLVLSVIPQLNTYVLGLPMVSMLVYVWSRENPNAQINIYGILQLKAFYLPWVMLLLDVIFGSPLMPGLLGIMVGHLYYYFAVLHPLATGKNYLKTPKWVHKIVARFRIGMQANAPVRAPANGNAGTGAFRGRSYRLNQ</sequence>
<feature type="chain" id="PRO_0000249242" description="Derlin-1.2">
    <location>
        <begin position="1"/>
        <end position="243"/>
    </location>
</feature>
<feature type="topological domain" description="Cytoplasmic" evidence="1">
    <location>
        <begin position="1"/>
        <end position="20"/>
    </location>
</feature>
<feature type="transmembrane region" description="Helical; Name=1" evidence="1">
    <location>
        <begin position="21"/>
        <end position="41"/>
    </location>
</feature>
<feature type="topological domain" description="Lumenal" evidence="1">
    <location>
        <begin position="42"/>
        <end position="54"/>
    </location>
</feature>
<feature type="transmembrane region" description="Helical; Name=2" evidence="1">
    <location>
        <begin position="55"/>
        <end position="75"/>
    </location>
</feature>
<feature type="topological domain" description="Cytoplasmic" evidence="1">
    <location>
        <begin position="76"/>
        <end position="94"/>
    </location>
</feature>
<feature type="transmembrane region" description="Helical; Name=3" evidence="1">
    <location>
        <begin position="95"/>
        <end position="115"/>
    </location>
</feature>
<feature type="topological domain" description="Lumenal" evidence="1">
    <location>
        <begin position="116"/>
        <end position="155"/>
    </location>
</feature>
<feature type="transmembrane region" description="Helical; Name=4" evidence="1">
    <location>
        <begin position="156"/>
        <end position="176"/>
    </location>
</feature>
<feature type="topological domain" description="Cytoplasmic" evidence="1">
    <location>
        <begin position="177"/>
        <end position="243"/>
    </location>
</feature>
<comment type="function">
    <text evidence="2">May be involved in the degradation process of specific misfolded endoplasmic reticulum (ER) luminal proteins.</text>
</comment>
<comment type="subcellular location">
    <subcellularLocation>
        <location evidence="2">Endoplasmic reticulum membrane</location>
        <topology evidence="2">Multi-pass membrane protein</topology>
    </subcellularLocation>
</comment>
<comment type="tissue specificity">
    <text evidence="2">Expressed in roots and endosperm.</text>
</comment>
<comment type="induction">
    <text evidence="2">By endoplasmic reticulum stress.</text>
</comment>
<comment type="miscellaneous">
    <text>Associated with ER-derived protein bodies in endosperm.</text>
</comment>
<comment type="similarity">
    <text evidence="3">Belongs to the derlin family.</text>
</comment>
<comment type="sequence caution" evidence="3">
    <conflict type="miscellaneous discrepancy">
        <sequence resource="EMBL-CDS" id="CAB97005"/>
    </conflict>
    <text>Chimeric cDNA.</text>
</comment>
<name>DER12_MAIZE</name>
<organism>
    <name type="scientific">Zea mays</name>
    <name type="common">Maize</name>
    <dbReference type="NCBI Taxonomy" id="4577"/>
    <lineage>
        <taxon>Eukaryota</taxon>
        <taxon>Viridiplantae</taxon>
        <taxon>Streptophyta</taxon>
        <taxon>Embryophyta</taxon>
        <taxon>Tracheophyta</taxon>
        <taxon>Spermatophyta</taxon>
        <taxon>Magnoliopsida</taxon>
        <taxon>Liliopsida</taxon>
        <taxon>Poales</taxon>
        <taxon>Poaceae</taxon>
        <taxon>PACMAD clade</taxon>
        <taxon>Panicoideae</taxon>
        <taxon>Andropogonodae</taxon>
        <taxon>Andropogoneae</taxon>
        <taxon>Tripsacinae</taxon>
        <taxon>Zea</taxon>
    </lineage>
</organism>
<keyword id="KW-0256">Endoplasmic reticulum</keyword>
<keyword id="KW-0472">Membrane</keyword>
<keyword id="KW-1185">Reference proteome</keyword>
<keyword id="KW-0346">Stress response</keyword>
<keyword id="KW-0812">Transmembrane</keyword>
<keyword id="KW-1133">Transmembrane helix</keyword>
<protein>
    <recommendedName>
        <fullName>Derlin-1.2</fullName>
    </recommendedName>
    <alternativeName>
        <fullName>ZmDerlin1-2</fullName>
    </alternativeName>
</protein>
<evidence type="ECO:0000255" key="1"/>
<evidence type="ECO:0000269" key="2">
    <source>
    </source>
</evidence>
<evidence type="ECO:0000305" key="3"/>
<proteinExistence type="evidence at transcript level"/>
<accession>Q4G2J5</accession>
<accession>Q9LEE5</accession>
<reference key="1">
    <citation type="journal article" date="2005" name="Plant Physiol.">
        <title>Identification and characterization of endoplasmic reticulum-associated degradation proteins differentially affected by endoplasmic reticulum stress.</title>
        <authorList>
            <person name="Kirst M.E."/>
            <person name="Meyer D.J."/>
            <person name="Gibbon B.C."/>
            <person name="Jung R."/>
            <person name="Boston R.S."/>
        </authorList>
    </citation>
    <scope>NUCLEOTIDE SEQUENCE [GENOMIC DNA / MRNA]</scope>
    <scope>FUNCTION</scope>
    <scope>SUBCELLULAR LOCATION</scope>
    <scope>TISSUE SPECIFICITY</scope>
    <scope>INDUCTION</scope>
    <source>
        <strain>cv. LH132</strain>
    </source>
</reference>
<reference key="2">
    <citation type="submission" date="2000-07" db="EMBL/GenBank/DDBJ databases">
        <title>A gradient of programmed cell death develops in scutellum during maize embryogenesis.</title>
        <authorList>
            <person name="Bastida M."/>
            <person name="Roca R."/>
            <person name="Cejudo F.J."/>
            <person name="Stiefel V."/>
            <person name="Puigdomenech P."/>
        </authorList>
    </citation>
    <scope>NUCLEOTIDE SEQUENCE [MRNA]</scope>
    <source>
        <strain>cv. Wisconsin 64A</strain>
    </source>
</reference>
<dbReference type="EMBL" id="AY854014">
    <property type="protein sequence ID" value="AAY41609.1"/>
    <property type="molecule type" value="mRNA"/>
</dbReference>
<dbReference type="EMBL" id="AY854018">
    <property type="protein sequence ID" value="AAY41613.1"/>
    <property type="molecule type" value="Genomic_DNA"/>
</dbReference>
<dbReference type="EMBL" id="AJ251622">
    <property type="protein sequence ID" value="CAB97005.1"/>
    <property type="status" value="ALT_SEQ"/>
    <property type="molecule type" value="mRNA"/>
</dbReference>
<dbReference type="RefSeq" id="NP_001105797.1">
    <property type="nucleotide sequence ID" value="NM_001112327.1"/>
</dbReference>
<dbReference type="SMR" id="Q4G2J5"/>
<dbReference type="FunCoup" id="Q4G2J5">
    <property type="interactions" value="721"/>
</dbReference>
<dbReference type="STRING" id="4577.Q4G2J5"/>
<dbReference type="PaxDb" id="4577-GRMZM2G143817_P01"/>
<dbReference type="EnsemblPlants" id="Zm00001eb283510_T003">
    <property type="protein sequence ID" value="Zm00001eb283510_P003"/>
    <property type="gene ID" value="Zm00001eb283510"/>
</dbReference>
<dbReference type="GeneID" id="606470"/>
<dbReference type="Gramene" id="Zm00001eb283510_T003">
    <property type="protein sequence ID" value="Zm00001eb283510_P003"/>
    <property type="gene ID" value="Zm00001eb283510"/>
</dbReference>
<dbReference type="KEGG" id="zma:606470"/>
<dbReference type="eggNOG" id="KOG0858">
    <property type="taxonomic scope" value="Eukaryota"/>
</dbReference>
<dbReference type="HOGENOM" id="CLU_051898_5_2_1"/>
<dbReference type="InParanoid" id="Q4G2J5"/>
<dbReference type="OMA" id="SSPAEWY"/>
<dbReference type="OrthoDB" id="1716531at2759"/>
<dbReference type="Proteomes" id="UP000007305">
    <property type="component" value="Chromosome 6"/>
</dbReference>
<dbReference type="ExpressionAtlas" id="Q4G2J5">
    <property type="expression patterns" value="baseline and differential"/>
</dbReference>
<dbReference type="GO" id="GO:0005789">
    <property type="term" value="C:endoplasmic reticulum membrane"/>
    <property type="evidence" value="ECO:0000318"/>
    <property type="project" value="GO_Central"/>
</dbReference>
<dbReference type="GO" id="GO:0005047">
    <property type="term" value="F:signal recognition particle binding"/>
    <property type="evidence" value="ECO:0000318"/>
    <property type="project" value="GO_Central"/>
</dbReference>
<dbReference type="GO" id="GO:0030968">
    <property type="term" value="P:endoplasmic reticulum unfolded protein response"/>
    <property type="evidence" value="ECO:0000318"/>
    <property type="project" value="GO_Central"/>
</dbReference>
<dbReference type="GO" id="GO:0036503">
    <property type="term" value="P:ERAD pathway"/>
    <property type="evidence" value="ECO:0000318"/>
    <property type="project" value="GO_Central"/>
</dbReference>
<dbReference type="InterPro" id="IPR007599">
    <property type="entry name" value="DER1"/>
</dbReference>
<dbReference type="InterPro" id="IPR035952">
    <property type="entry name" value="Rhomboid-like_sf"/>
</dbReference>
<dbReference type="PANTHER" id="PTHR11009">
    <property type="entry name" value="DER1-LIKE PROTEIN, DERLIN"/>
    <property type="match status" value="1"/>
</dbReference>
<dbReference type="Pfam" id="PF04511">
    <property type="entry name" value="DER1"/>
    <property type="match status" value="1"/>
</dbReference>
<dbReference type="SUPFAM" id="SSF144091">
    <property type="entry name" value="Rhomboid-like"/>
    <property type="match status" value="1"/>
</dbReference>
<gene>
    <name type="primary">DER1.2</name>
    <name type="synonym">SOR</name>
</gene>